<organism>
    <name type="scientific">Haemophilus influenzae (strain ATCC 51907 / DSM 11121 / KW20 / Rd)</name>
    <dbReference type="NCBI Taxonomy" id="71421"/>
    <lineage>
        <taxon>Bacteria</taxon>
        <taxon>Pseudomonadati</taxon>
        <taxon>Pseudomonadota</taxon>
        <taxon>Gammaproteobacteria</taxon>
        <taxon>Pasteurellales</taxon>
        <taxon>Pasteurellaceae</taxon>
        <taxon>Haemophilus</taxon>
    </lineage>
</organism>
<evidence type="ECO:0000250" key="1"/>
<evidence type="ECO:0000255" key="2">
    <source>
        <dbReference type="HAMAP-Rule" id="MF_00318"/>
    </source>
</evidence>
<accession>P43806</accession>
<gene>
    <name evidence="2" type="primary">eno</name>
    <name type="ordered locus">HI_0932</name>
</gene>
<sequence length="436" mass="46115">MAKIVKVIGREIIDSRGNPTVEAEVHLXGGFVGLAAAPSGASTGSREALELRDGDKSRFLGKGVLKAVAAVNNEIAQAIVGKDATNQAEIDQIMIDLDGTENKSNFGANAILAVSLANAKAAAASKGLPLYAYIAELNGTAGVYSMPLPMMNIINGGEHADNNVDIQEFMIQPVGAKTLREALRIGAEVFHNLAKVLKAKGMSTAVGDEGGFAPNLASNADALACIKEAVEKAGYVLGKDVTLAMDCASSEFYNKENGMYEMKGEGKSFTSQEFTHYLEELCKEYPIVSIEDGQDESDWEGFAYQTKVLGDRVQLVGDDLFVTNTKILKEGIEKGIANSILIKFNQIGSLTETLAAIKMAKDAGYTAVISHRSGETEDATIADLAVGTAAGQIKTGSMSRSDRIAKYNQLIRIEEALERAGTPAAFPGLKAVKGQA</sequence>
<keyword id="KW-0963">Cytoplasm</keyword>
<keyword id="KW-0324">Glycolysis</keyword>
<keyword id="KW-0456">Lyase</keyword>
<keyword id="KW-0460">Magnesium</keyword>
<keyword id="KW-0479">Metal-binding</keyword>
<keyword id="KW-1185">Reference proteome</keyword>
<keyword id="KW-0964">Secreted</keyword>
<proteinExistence type="inferred from homology"/>
<name>ENO_HAEIN</name>
<comment type="function">
    <text evidence="2">Catalyzes the reversible conversion of 2-phosphoglycerate (2-PG) into phosphoenolpyruvate (PEP). It is essential for the degradation of carbohydrates via glycolysis.</text>
</comment>
<comment type="catalytic activity">
    <reaction evidence="2">
        <text>(2R)-2-phosphoglycerate = phosphoenolpyruvate + H2O</text>
        <dbReference type="Rhea" id="RHEA:10164"/>
        <dbReference type="ChEBI" id="CHEBI:15377"/>
        <dbReference type="ChEBI" id="CHEBI:58289"/>
        <dbReference type="ChEBI" id="CHEBI:58702"/>
        <dbReference type="EC" id="4.2.1.11"/>
    </reaction>
</comment>
<comment type="cofactor">
    <cofactor evidence="2">
        <name>Mg(2+)</name>
        <dbReference type="ChEBI" id="CHEBI:18420"/>
    </cofactor>
    <text evidence="2">Binds a second Mg(2+) ion via substrate during catalysis.</text>
</comment>
<comment type="pathway">
    <text evidence="2">Carbohydrate degradation; glycolysis; pyruvate from D-glyceraldehyde 3-phosphate: step 4/5.</text>
</comment>
<comment type="subunit">
    <text evidence="2">Component of the RNA degradosome, a multiprotein complex involved in RNA processing and mRNA degradation.</text>
</comment>
<comment type="subcellular location">
    <subcellularLocation>
        <location evidence="2">Cytoplasm</location>
    </subcellularLocation>
    <subcellularLocation>
        <location evidence="2">Secreted</location>
    </subcellularLocation>
    <subcellularLocation>
        <location evidence="2">Cell surface</location>
    </subcellularLocation>
    <text evidence="2">Fractions of enolase are present in both the cytoplasm and on the cell surface.</text>
</comment>
<comment type="similarity">
    <text evidence="2">Belongs to the enolase family.</text>
</comment>
<protein>
    <recommendedName>
        <fullName evidence="2">Enolase</fullName>
        <ecNumber evidence="2">4.2.1.11</ecNumber>
    </recommendedName>
    <alternativeName>
        <fullName evidence="2">2-phospho-D-glycerate hydro-lyase</fullName>
    </alternativeName>
    <alternativeName>
        <fullName evidence="2">2-phosphoglycerate dehydratase</fullName>
    </alternativeName>
</protein>
<dbReference type="EC" id="4.2.1.11" evidence="2"/>
<dbReference type="EMBL" id="L42023">
    <property type="protein sequence ID" value="AAC22590.1"/>
    <property type="molecule type" value="Genomic_DNA"/>
</dbReference>
<dbReference type="PIR" id="E64103">
    <property type="entry name" value="E64103"/>
</dbReference>
<dbReference type="RefSeq" id="NP_439092.1">
    <property type="nucleotide sequence ID" value="NC_000907.1"/>
</dbReference>
<dbReference type="STRING" id="71421.HI_0932"/>
<dbReference type="EnsemblBacteria" id="AAC22590">
    <property type="protein sequence ID" value="AAC22590"/>
    <property type="gene ID" value="HI_0932"/>
</dbReference>
<dbReference type="KEGG" id="hin:HI_0932"/>
<dbReference type="PATRIC" id="fig|71421.8.peg.973"/>
<dbReference type="eggNOG" id="COG0148">
    <property type="taxonomic scope" value="Bacteria"/>
</dbReference>
<dbReference type="HOGENOM" id="CLU_031223_2_1_6"/>
<dbReference type="OrthoDB" id="9804716at2"/>
<dbReference type="PhylomeDB" id="P43806"/>
<dbReference type="BioCyc" id="HINF71421:G1GJ1-972-MONOMER"/>
<dbReference type="UniPathway" id="UPA00109">
    <property type="reaction ID" value="UER00187"/>
</dbReference>
<dbReference type="Proteomes" id="UP000000579">
    <property type="component" value="Chromosome"/>
</dbReference>
<dbReference type="GO" id="GO:0009986">
    <property type="term" value="C:cell surface"/>
    <property type="evidence" value="ECO:0007669"/>
    <property type="project" value="UniProtKB-SubCell"/>
</dbReference>
<dbReference type="GO" id="GO:0005576">
    <property type="term" value="C:extracellular region"/>
    <property type="evidence" value="ECO:0007669"/>
    <property type="project" value="UniProtKB-SubCell"/>
</dbReference>
<dbReference type="GO" id="GO:0000015">
    <property type="term" value="C:phosphopyruvate hydratase complex"/>
    <property type="evidence" value="ECO:0000318"/>
    <property type="project" value="GO_Central"/>
</dbReference>
<dbReference type="GO" id="GO:0000287">
    <property type="term" value="F:magnesium ion binding"/>
    <property type="evidence" value="ECO:0007669"/>
    <property type="project" value="UniProtKB-UniRule"/>
</dbReference>
<dbReference type="GO" id="GO:0004634">
    <property type="term" value="F:phosphopyruvate hydratase activity"/>
    <property type="evidence" value="ECO:0000318"/>
    <property type="project" value="GO_Central"/>
</dbReference>
<dbReference type="GO" id="GO:0006096">
    <property type="term" value="P:glycolytic process"/>
    <property type="evidence" value="ECO:0000318"/>
    <property type="project" value="GO_Central"/>
</dbReference>
<dbReference type="CDD" id="cd03313">
    <property type="entry name" value="enolase"/>
    <property type="match status" value="1"/>
</dbReference>
<dbReference type="FunFam" id="3.20.20.120:FF:000001">
    <property type="entry name" value="Enolase"/>
    <property type="match status" value="1"/>
</dbReference>
<dbReference type="FunFam" id="3.30.390.10:FF:000001">
    <property type="entry name" value="Enolase"/>
    <property type="match status" value="1"/>
</dbReference>
<dbReference type="Gene3D" id="3.20.20.120">
    <property type="entry name" value="Enolase-like C-terminal domain"/>
    <property type="match status" value="1"/>
</dbReference>
<dbReference type="Gene3D" id="3.30.390.10">
    <property type="entry name" value="Enolase-like, N-terminal domain"/>
    <property type="match status" value="1"/>
</dbReference>
<dbReference type="HAMAP" id="MF_00318">
    <property type="entry name" value="Enolase"/>
    <property type="match status" value="1"/>
</dbReference>
<dbReference type="InterPro" id="IPR000941">
    <property type="entry name" value="Enolase"/>
</dbReference>
<dbReference type="InterPro" id="IPR036849">
    <property type="entry name" value="Enolase-like_C_sf"/>
</dbReference>
<dbReference type="InterPro" id="IPR029017">
    <property type="entry name" value="Enolase-like_N"/>
</dbReference>
<dbReference type="InterPro" id="IPR020810">
    <property type="entry name" value="Enolase_C"/>
</dbReference>
<dbReference type="InterPro" id="IPR020809">
    <property type="entry name" value="Enolase_CS"/>
</dbReference>
<dbReference type="InterPro" id="IPR020811">
    <property type="entry name" value="Enolase_N"/>
</dbReference>
<dbReference type="NCBIfam" id="TIGR01060">
    <property type="entry name" value="eno"/>
    <property type="match status" value="1"/>
</dbReference>
<dbReference type="PANTHER" id="PTHR11902">
    <property type="entry name" value="ENOLASE"/>
    <property type="match status" value="1"/>
</dbReference>
<dbReference type="PANTHER" id="PTHR11902:SF1">
    <property type="entry name" value="ENOLASE"/>
    <property type="match status" value="1"/>
</dbReference>
<dbReference type="Pfam" id="PF00113">
    <property type="entry name" value="Enolase_C"/>
    <property type="match status" value="1"/>
</dbReference>
<dbReference type="Pfam" id="PF03952">
    <property type="entry name" value="Enolase_N"/>
    <property type="match status" value="1"/>
</dbReference>
<dbReference type="PIRSF" id="PIRSF001400">
    <property type="entry name" value="Enolase"/>
    <property type="match status" value="1"/>
</dbReference>
<dbReference type="PRINTS" id="PR00148">
    <property type="entry name" value="ENOLASE"/>
</dbReference>
<dbReference type="SFLD" id="SFLDF00002">
    <property type="entry name" value="enolase"/>
    <property type="match status" value="1"/>
</dbReference>
<dbReference type="SFLD" id="SFLDG00178">
    <property type="entry name" value="enolase"/>
    <property type="match status" value="1"/>
</dbReference>
<dbReference type="SMART" id="SM01192">
    <property type="entry name" value="Enolase_C"/>
    <property type="match status" value="1"/>
</dbReference>
<dbReference type="SMART" id="SM01193">
    <property type="entry name" value="Enolase_N"/>
    <property type="match status" value="1"/>
</dbReference>
<dbReference type="SUPFAM" id="SSF51604">
    <property type="entry name" value="Enolase C-terminal domain-like"/>
    <property type="match status" value="1"/>
</dbReference>
<dbReference type="SUPFAM" id="SSF54826">
    <property type="entry name" value="Enolase N-terminal domain-like"/>
    <property type="match status" value="1"/>
</dbReference>
<dbReference type="PROSITE" id="PS00164">
    <property type="entry name" value="ENOLASE"/>
    <property type="match status" value="1"/>
</dbReference>
<feature type="initiator methionine" description="Removed" evidence="1">
    <location>
        <position position="1"/>
    </location>
</feature>
<feature type="chain" id="PRO_0000133895" description="Enolase">
    <location>
        <begin position="2"/>
        <end position="436"/>
    </location>
</feature>
<feature type="active site" description="Proton donor" evidence="2">
    <location>
        <position position="209"/>
    </location>
</feature>
<feature type="active site" description="Proton acceptor" evidence="2">
    <location>
        <position position="343"/>
    </location>
</feature>
<feature type="binding site" evidence="2">
    <location>
        <position position="167"/>
    </location>
    <ligand>
        <name>(2R)-2-phosphoglycerate</name>
        <dbReference type="ChEBI" id="CHEBI:58289"/>
    </ligand>
</feature>
<feature type="binding site" evidence="2">
    <location>
        <position position="246"/>
    </location>
    <ligand>
        <name>Mg(2+)</name>
        <dbReference type="ChEBI" id="CHEBI:18420"/>
    </ligand>
</feature>
<feature type="binding site" evidence="2">
    <location>
        <position position="291"/>
    </location>
    <ligand>
        <name>Mg(2+)</name>
        <dbReference type="ChEBI" id="CHEBI:18420"/>
    </ligand>
</feature>
<feature type="binding site" evidence="2">
    <location>
        <position position="318"/>
    </location>
    <ligand>
        <name>Mg(2+)</name>
        <dbReference type="ChEBI" id="CHEBI:18420"/>
    </ligand>
</feature>
<feature type="binding site" evidence="2">
    <location>
        <position position="343"/>
    </location>
    <ligand>
        <name>(2R)-2-phosphoglycerate</name>
        <dbReference type="ChEBI" id="CHEBI:58289"/>
    </ligand>
</feature>
<feature type="binding site" evidence="2">
    <location>
        <position position="372"/>
    </location>
    <ligand>
        <name>(2R)-2-phosphoglycerate</name>
        <dbReference type="ChEBI" id="CHEBI:58289"/>
    </ligand>
</feature>
<feature type="binding site" evidence="2">
    <location>
        <position position="373"/>
    </location>
    <ligand>
        <name>(2R)-2-phosphoglycerate</name>
        <dbReference type="ChEBI" id="CHEBI:58289"/>
    </ligand>
</feature>
<feature type="binding site" evidence="2">
    <location>
        <position position="394"/>
    </location>
    <ligand>
        <name>(2R)-2-phosphoglycerate</name>
        <dbReference type="ChEBI" id="CHEBI:58289"/>
    </ligand>
</feature>
<reference key="1">
    <citation type="journal article" date="1995" name="Science">
        <title>Whole-genome random sequencing and assembly of Haemophilus influenzae Rd.</title>
        <authorList>
            <person name="Fleischmann R.D."/>
            <person name="Adams M.D."/>
            <person name="White O."/>
            <person name="Clayton R.A."/>
            <person name="Kirkness E.F."/>
            <person name="Kerlavage A.R."/>
            <person name="Bult C.J."/>
            <person name="Tomb J.-F."/>
            <person name="Dougherty B.A."/>
            <person name="Merrick J.M."/>
            <person name="McKenney K."/>
            <person name="Sutton G.G."/>
            <person name="FitzHugh W."/>
            <person name="Fields C.A."/>
            <person name="Gocayne J.D."/>
            <person name="Scott J.D."/>
            <person name="Shirley R."/>
            <person name="Liu L.-I."/>
            <person name="Glodek A."/>
            <person name="Kelley J.M."/>
            <person name="Weidman J.F."/>
            <person name="Phillips C.A."/>
            <person name="Spriggs T."/>
            <person name="Hedblom E."/>
            <person name="Cotton M.D."/>
            <person name="Utterback T.R."/>
            <person name="Hanna M.C."/>
            <person name="Nguyen D.T."/>
            <person name="Saudek D.M."/>
            <person name="Brandon R.C."/>
            <person name="Fine L.D."/>
            <person name="Fritchman J.L."/>
            <person name="Fuhrmann J.L."/>
            <person name="Geoghagen N.S.M."/>
            <person name="Gnehm C.L."/>
            <person name="McDonald L.A."/>
            <person name="Small K.V."/>
            <person name="Fraser C.M."/>
            <person name="Smith H.O."/>
            <person name="Venter J.C."/>
        </authorList>
    </citation>
    <scope>NUCLEOTIDE SEQUENCE [LARGE SCALE GENOMIC DNA]</scope>
    <source>
        <strain>ATCC 51907 / DSM 11121 / KW20 / Rd</strain>
    </source>
</reference>